<sequence>MAAALQTNIRPVKFPATLRALTKQSSPAPFRVRCAAASPGKKRYNITLLPGDGIGPEVISIAKNVLQQAGSLEGLEFSFQEMPVGGAALDLVGVPLPEETVSAAKESDAVLLGAIGGYKWDKNEKHLKPETGLLQLRAGLKVFANLRPATVLPQLVDASTLKREVAEGVDLMVVRELTGGIYFGVPRGIKTNENGEEVGYNTEVYAAHEIDRIARVAFETARKRRGKLCSVDKANVLDASILWRRRVTALAAEYPDVELSHMYVDNAAMQLVRDPKQFDTIVTNNIFGDILSDEASMITGSIGMLPSASLSDSGPGLFEPIHGSAPDIAGQDKANPLATILSAAMLLKYGLGEEKAAKRIEDAVLGALNKGFRTGDIYSAGTKLVGCKEMGEEVLKSVDSHVQASV</sequence>
<evidence type="ECO:0000250" key="1"/>
<evidence type="ECO:0000250" key="2">
    <source>
        <dbReference type="UniProtKB" id="Q9FMT1"/>
    </source>
</evidence>
<evidence type="ECO:0000255" key="3"/>
<evidence type="ECO:0000305" key="4"/>
<keyword id="KW-0028">Amino-acid biosynthesis</keyword>
<keyword id="KW-0100">Branched-chain amino acid biosynthesis</keyword>
<keyword id="KW-0150">Chloroplast</keyword>
<keyword id="KW-0432">Leucine biosynthesis</keyword>
<keyword id="KW-0460">Magnesium</keyword>
<keyword id="KW-0464">Manganese</keyword>
<keyword id="KW-0479">Metal-binding</keyword>
<keyword id="KW-0520">NAD</keyword>
<keyword id="KW-0560">Oxidoreductase</keyword>
<keyword id="KW-0597">Phosphoprotein</keyword>
<keyword id="KW-0934">Plastid</keyword>
<keyword id="KW-0809">Transit peptide</keyword>
<accession>P29102</accession>
<proteinExistence type="evidence at transcript level"/>
<reference key="1">
    <citation type="journal article" date="1992" name="Plant Mol. Biol.">
        <title>Cloning of a cDNA for rape chloroplast 3-isopropylmalate dehydrogenase by genetic complementation in yeast.</title>
        <authorList>
            <person name="Ellerstroem M."/>
            <person name="Josefsson L.G."/>
            <person name="Rask L."/>
            <person name="Ronne H."/>
        </authorList>
    </citation>
    <scope>NUCLEOTIDE SEQUENCE [MRNA]</scope>
    <source>
        <strain>cv. Svalofs Karat 20516-K</strain>
    </source>
</reference>
<name>LEU3_BRANA</name>
<comment type="function">
    <text>Catalyzes the oxidation of 3-carboxy-2-hydroxy-4-methylpentanoate (3-isopropylmalate) to 3-carboxy-4-methyl-2-oxopentanoate. The product decarboxylates to 4-methyl-2 oxopentanoate.</text>
</comment>
<comment type="catalytic activity">
    <reaction>
        <text>(2R,3S)-3-isopropylmalate + NAD(+) = 4-methyl-2-oxopentanoate + CO2 + NADH</text>
        <dbReference type="Rhea" id="RHEA:32271"/>
        <dbReference type="ChEBI" id="CHEBI:16526"/>
        <dbReference type="ChEBI" id="CHEBI:17865"/>
        <dbReference type="ChEBI" id="CHEBI:35121"/>
        <dbReference type="ChEBI" id="CHEBI:57540"/>
        <dbReference type="ChEBI" id="CHEBI:57945"/>
        <dbReference type="EC" id="1.1.1.85"/>
    </reaction>
</comment>
<comment type="cofactor">
    <cofactor evidence="1">
        <name>Mg(2+)</name>
        <dbReference type="ChEBI" id="CHEBI:18420"/>
    </cofactor>
    <cofactor evidence="1">
        <name>Mn(2+)</name>
        <dbReference type="ChEBI" id="CHEBI:29035"/>
    </cofactor>
    <text evidence="1">Binds 1 Mg(2+) or Mn(2+) ion per subunit.</text>
</comment>
<comment type="pathway">
    <text>Amino-acid biosynthesis; L-leucine biosynthesis; L-leucine from 3-methyl-2-oxobutanoate: step 3/4.</text>
</comment>
<comment type="subunit">
    <text evidence="1">Homodimer.</text>
</comment>
<comment type="subcellular location">
    <subcellularLocation>
        <location>Plastid</location>
        <location>Chloroplast</location>
    </subcellularLocation>
</comment>
<comment type="similarity">
    <text evidence="4">Belongs to the isocitrate and isopropylmalate dehydrogenases family.</text>
</comment>
<dbReference type="EC" id="1.1.1.85"/>
<dbReference type="EMBL" id="X59970">
    <property type="protein sequence ID" value="CAA42596.1"/>
    <property type="molecule type" value="mRNA"/>
</dbReference>
<dbReference type="PIR" id="S20510">
    <property type="entry name" value="S20510"/>
</dbReference>
<dbReference type="RefSeq" id="NP_001303020.1">
    <property type="nucleotide sequence ID" value="NM_001316091.1"/>
</dbReference>
<dbReference type="SMR" id="P29102"/>
<dbReference type="GeneID" id="106398379"/>
<dbReference type="KEGG" id="bna:106398379"/>
<dbReference type="OrthoDB" id="419183at2759"/>
<dbReference type="BRENDA" id="1.1.1.85">
    <property type="organism ID" value="944"/>
</dbReference>
<dbReference type="UniPathway" id="UPA00048">
    <property type="reaction ID" value="UER00072"/>
</dbReference>
<dbReference type="GO" id="GO:0009507">
    <property type="term" value="C:chloroplast"/>
    <property type="evidence" value="ECO:0007669"/>
    <property type="project" value="UniProtKB-SubCell"/>
</dbReference>
<dbReference type="GO" id="GO:0003862">
    <property type="term" value="F:3-isopropylmalate dehydrogenase activity"/>
    <property type="evidence" value="ECO:0007669"/>
    <property type="project" value="UniProtKB-EC"/>
</dbReference>
<dbReference type="GO" id="GO:0000287">
    <property type="term" value="F:magnesium ion binding"/>
    <property type="evidence" value="ECO:0007669"/>
    <property type="project" value="InterPro"/>
</dbReference>
<dbReference type="GO" id="GO:0051287">
    <property type="term" value="F:NAD binding"/>
    <property type="evidence" value="ECO:0007669"/>
    <property type="project" value="InterPro"/>
</dbReference>
<dbReference type="GO" id="GO:0009098">
    <property type="term" value="P:L-leucine biosynthetic process"/>
    <property type="evidence" value="ECO:0007669"/>
    <property type="project" value="UniProtKB-UniPathway"/>
</dbReference>
<dbReference type="FunFam" id="3.40.718.10:FF:000004">
    <property type="entry name" value="3-isopropylmalate dehydrogenase"/>
    <property type="match status" value="1"/>
</dbReference>
<dbReference type="Gene3D" id="3.40.718.10">
    <property type="entry name" value="Isopropylmalate Dehydrogenase"/>
    <property type="match status" value="1"/>
</dbReference>
<dbReference type="HAMAP" id="MF_01033">
    <property type="entry name" value="LeuB_type1"/>
    <property type="match status" value="1"/>
</dbReference>
<dbReference type="InterPro" id="IPR019818">
    <property type="entry name" value="IsoCit/isopropylmalate_DH_CS"/>
</dbReference>
<dbReference type="InterPro" id="IPR024084">
    <property type="entry name" value="IsoPropMal-DH-like_dom"/>
</dbReference>
<dbReference type="InterPro" id="IPR004429">
    <property type="entry name" value="Isopropylmalate_DH"/>
</dbReference>
<dbReference type="NCBIfam" id="TIGR00169">
    <property type="entry name" value="leuB"/>
    <property type="match status" value="1"/>
</dbReference>
<dbReference type="PANTHER" id="PTHR42979">
    <property type="entry name" value="3-ISOPROPYLMALATE DEHYDROGENASE"/>
    <property type="match status" value="1"/>
</dbReference>
<dbReference type="PANTHER" id="PTHR42979:SF7">
    <property type="entry name" value="3-ISOPROPYLMALATE DEHYDROGENASE"/>
    <property type="match status" value="1"/>
</dbReference>
<dbReference type="Pfam" id="PF00180">
    <property type="entry name" value="Iso_dh"/>
    <property type="match status" value="1"/>
</dbReference>
<dbReference type="SMART" id="SM01329">
    <property type="entry name" value="Iso_dh"/>
    <property type="match status" value="1"/>
</dbReference>
<dbReference type="SUPFAM" id="SSF53659">
    <property type="entry name" value="Isocitrate/Isopropylmalate dehydrogenase-like"/>
    <property type="match status" value="1"/>
</dbReference>
<dbReference type="PROSITE" id="PS00470">
    <property type="entry name" value="IDH_IMDH"/>
    <property type="match status" value="1"/>
</dbReference>
<protein>
    <recommendedName>
        <fullName>3-isopropylmalate dehydrogenase, chloroplastic</fullName>
        <shortName>3-IPM-DH</shortName>
        <shortName>IMDH</shortName>
        <ecNumber>1.1.1.85</ecNumber>
    </recommendedName>
    <alternativeName>
        <fullName>Beta-IPM dehydrogenase</fullName>
    </alternativeName>
</protein>
<feature type="transit peptide" description="Chloroplast" evidence="3">
    <location>
        <begin position="1"/>
        <end position="34"/>
    </location>
</feature>
<feature type="chain" id="PRO_0000014456" description="3-isopropylmalate dehydrogenase, chloroplastic">
    <location>
        <begin position="35"/>
        <end position="406"/>
    </location>
</feature>
<feature type="binding site" evidence="1">
    <location>
        <begin position="117"/>
        <end position="130"/>
    </location>
    <ligand>
        <name>NAD(+)</name>
        <dbReference type="ChEBI" id="CHEBI:57540"/>
    </ligand>
</feature>
<feature type="binding site" evidence="1">
    <location>
        <position position="137"/>
    </location>
    <ligand>
        <name>substrate</name>
    </ligand>
</feature>
<feature type="binding site" evidence="1">
    <location>
        <position position="147"/>
    </location>
    <ligand>
        <name>substrate</name>
    </ligand>
</feature>
<feature type="binding site" evidence="1">
    <location>
        <position position="175"/>
    </location>
    <ligand>
        <name>substrate</name>
    </ligand>
</feature>
<feature type="binding site" evidence="1">
    <location>
        <position position="265"/>
    </location>
    <ligand>
        <name>Mg(2+)</name>
        <dbReference type="ChEBI" id="CHEBI:18420"/>
    </ligand>
</feature>
<feature type="binding site" evidence="1">
    <location>
        <position position="265"/>
    </location>
    <ligand>
        <name>substrate</name>
    </ligand>
</feature>
<feature type="binding site" evidence="1">
    <location>
        <position position="289"/>
    </location>
    <ligand>
        <name>Mg(2+)</name>
        <dbReference type="ChEBI" id="CHEBI:18420"/>
    </ligand>
</feature>
<feature type="binding site" evidence="1">
    <location>
        <position position="293"/>
    </location>
    <ligand>
        <name>Mg(2+)</name>
        <dbReference type="ChEBI" id="CHEBI:18420"/>
    </ligand>
</feature>
<feature type="binding site" evidence="1">
    <location>
        <begin position="323"/>
        <end position="335"/>
    </location>
    <ligand>
        <name>NAD(+)</name>
        <dbReference type="ChEBI" id="CHEBI:57540"/>
    </ligand>
</feature>
<feature type="site" description="Important for catalysis" evidence="1">
    <location>
        <position position="182"/>
    </location>
</feature>
<feature type="site" description="Important for catalysis" evidence="1">
    <location>
        <position position="233"/>
    </location>
</feature>
<feature type="modified residue" description="Phosphoserine" evidence="2">
    <location>
        <position position="71"/>
    </location>
</feature>
<organism>
    <name type="scientific">Brassica napus</name>
    <name type="common">Rape</name>
    <dbReference type="NCBI Taxonomy" id="3708"/>
    <lineage>
        <taxon>Eukaryota</taxon>
        <taxon>Viridiplantae</taxon>
        <taxon>Streptophyta</taxon>
        <taxon>Embryophyta</taxon>
        <taxon>Tracheophyta</taxon>
        <taxon>Spermatophyta</taxon>
        <taxon>Magnoliopsida</taxon>
        <taxon>eudicotyledons</taxon>
        <taxon>Gunneridae</taxon>
        <taxon>Pentapetalae</taxon>
        <taxon>rosids</taxon>
        <taxon>malvids</taxon>
        <taxon>Brassicales</taxon>
        <taxon>Brassicaceae</taxon>
        <taxon>Brassiceae</taxon>
        <taxon>Brassica</taxon>
    </lineage>
</organism>